<sequence length="128" mass="14293">MQRNMLKSKIHRVAVTHCELHYEGSCAIDEDLLEAANIVENERIDIWNINNGERFSTYAIKGERGSGMISLNGSAARRAQLGDLVIIAAFAVVDEAELKAGWKPDLVFVDDNNKIKGSRDHVPTQNWT</sequence>
<keyword id="KW-0068">Autocatalytic cleavage</keyword>
<keyword id="KW-0963">Cytoplasm</keyword>
<keyword id="KW-0210">Decarboxylase</keyword>
<keyword id="KW-0456">Lyase</keyword>
<keyword id="KW-0566">Pantothenate biosynthesis</keyword>
<keyword id="KW-0670">Pyruvate</keyword>
<keyword id="KW-0704">Schiff base</keyword>
<keyword id="KW-0865">Zymogen</keyword>
<reference key="1">
    <citation type="journal article" date="2011" name="J. Bacteriol.">
        <title>Complete genome sequence of the plant growth-promoting endophyte Burkholderia phytofirmans strain PsJN.</title>
        <authorList>
            <person name="Weilharter A."/>
            <person name="Mitter B."/>
            <person name="Shin M.V."/>
            <person name="Chain P.S."/>
            <person name="Nowak J."/>
            <person name="Sessitsch A."/>
        </authorList>
    </citation>
    <scope>NUCLEOTIDE SEQUENCE [LARGE SCALE GENOMIC DNA]</scope>
    <source>
        <strain>DSM 17436 / LMG 22146 / PsJN</strain>
    </source>
</reference>
<dbReference type="EC" id="4.1.1.11" evidence="1"/>
<dbReference type="EMBL" id="CP001052">
    <property type="protein sequence ID" value="ACD15428.1"/>
    <property type="molecule type" value="Genomic_DNA"/>
</dbReference>
<dbReference type="RefSeq" id="WP_012432059.1">
    <property type="nucleotide sequence ID" value="NC_010681.1"/>
</dbReference>
<dbReference type="SMR" id="B2T171"/>
<dbReference type="STRING" id="398527.Bphyt_1009"/>
<dbReference type="KEGG" id="bpy:Bphyt_1009"/>
<dbReference type="eggNOG" id="COG0853">
    <property type="taxonomic scope" value="Bacteria"/>
</dbReference>
<dbReference type="HOGENOM" id="CLU_115305_2_1_4"/>
<dbReference type="OrthoDB" id="9803983at2"/>
<dbReference type="UniPathway" id="UPA00028">
    <property type="reaction ID" value="UER00002"/>
</dbReference>
<dbReference type="Proteomes" id="UP000001739">
    <property type="component" value="Chromosome 1"/>
</dbReference>
<dbReference type="GO" id="GO:0005829">
    <property type="term" value="C:cytosol"/>
    <property type="evidence" value="ECO:0007669"/>
    <property type="project" value="TreeGrafter"/>
</dbReference>
<dbReference type="GO" id="GO:0004068">
    <property type="term" value="F:aspartate 1-decarboxylase activity"/>
    <property type="evidence" value="ECO:0007669"/>
    <property type="project" value="UniProtKB-UniRule"/>
</dbReference>
<dbReference type="GO" id="GO:0006523">
    <property type="term" value="P:alanine biosynthetic process"/>
    <property type="evidence" value="ECO:0007669"/>
    <property type="project" value="InterPro"/>
</dbReference>
<dbReference type="GO" id="GO:0015940">
    <property type="term" value="P:pantothenate biosynthetic process"/>
    <property type="evidence" value="ECO:0007669"/>
    <property type="project" value="UniProtKB-UniRule"/>
</dbReference>
<dbReference type="CDD" id="cd06919">
    <property type="entry name" value="Asp_decarbox"/>
    <property type="match status" value="1"/>
</dbReference>
<dbReference type="Gene3D" id="2.40.40.20">
    <property type="match status" value="1"/>
</dbReference>
<dbReference type="HAMAP" id="MF_00446">
    <property type="entry name" value="PanD"/>
    <property type="match status" value="1"/>
</dbReference>
<dbReference type="InterPro" id="IPR009010">
    <property type="entry name" value="Asp_de-COase-like_dom_sf"/>
</dbReference>
<dbReference type="InterPro" id="IPR003190">
    <property type="entry name" value="Asp_decarbox"/>
</dbReference>
<dbReference type="NCBIfam" id="TIGR00223">
    <property type="entry name" value="panD"/>
    <property type="match status" value="1"/>
</dbReference>
<dbReference type="PANTHER" id="PTHR21012">
    <property type="entry name" value="ASPARTATE 1-DECARBOXYLASE"/>
    <property type="match status" value="1"/>
</dbReference>
<dbReference type="PANTHER" id="PTHR21012:SF0">
    <property type="entry name" value="ASPARTATE 1-DECARBOXYLASE"/>
    <property type="match status" value="1"/>
</dbReference>
<dbReference type="Pfam" id="PF02261">
    <property type="entry name" value="Asp_decarbox"/>
    <property type="match status" value="1"/>
</dbReference>
<dbReference type="PIRSF" id="PIRSF006246">
    <property type="entry name" value="Asp_decarbox"/>
    <property type="match status" value="1"/>
</dbReference>
<dbReference type="SUPFAM" id="SSF50692">
    <property type="entry name" value="ADC-like"/>
    <property type="match status" value="1"/>
</dbReference>
<organism>
    <name type="scientific">Paraburkholderia phytofirmans (strain DSM 17436 / LMG 22146 / PsJN)</name>
    <name type="common">Burkholderia phytofirmans</name>
    <dbReference type="NCBI Taxonomy" id="398527"/>
    <lineage>
        <taxon>Bacteria</taxon>
        <taxon>Pseudomonadati</taxon>
        <taxon>Pseudomonadota</taxon>
        <taxon>Betaproteobacteria</taxon>
        <taxon>Burkholderiales</taxon>
        <taxon>Burkholderiaceae</taxon>
        <taxon>Paraburkholderia</taxon>
    </lineage>
</organism>
<comment type="function">
    <text evidence="1">Catalyzes the pyruvoyl-dependent decarboxylation of aspartate to produce beta-alanine.</text>
</comment>
<comment type="catalytic activity">
    <reaction evidence="1">
        <text>L-aspartate + H(+) = beta-alanine + CO2</text>
        <dbReference type="Rhea" id="RHEA:19497"/>
        <dbReference type="ChEBI" id="CHEBI:15378"/>
        <dbReference type="ChEBI" id="CHEBI:16526"/>
        <dbReference type="ChEBI" id="CHEBI:29991"/>
        <dbReference type="ChEBI" id="CHEBI:57966"/>
        <dbReference type="EC" id="4.1.1.11"/>
    </reaction>
</comment>
<comment type="cofactor">
    <cofactor evidence="1">
        <name>pyruvate</name>
        <dbReference type="ChEBI" id="CHEBI:15361"/>
    </cofactor>
    <text evidence="1">Binds 1 pyruvoyl group covalently per subunit.</text>
</comment>
<comment type="pathway">
    <text evidence="1">Cofactor biosynthesis; (R)-pantothenate biosynthesis; beta-alanine from L-aspartate: step 1/1.</text>
</comment>
<comment type="subunit">
    <text evidence="1">Heterooctamer of four alpha and four beta subunits.</text>
</comment>
<comment type="subcellular location">
    <subcellularLocation>
        <location evidence="1">Cytoplasm</location>
    </subcellularLocation>
</comment>
<comment type="PTM">
    <text evidence="1">Is synthesized initially as an inactive proenzyme, which is activated by self-cleavage at a specific serine bond to produce a beta-subunit with a hydroxyl group at its C-terminus and an alpha-subunit with a pyruvoyl group at its N-terminus.</text>
</comment>
<comment type="similarity">
    <text evidence="1">Belongs to the PanD family.</text>
</comment>
<feature type="chain" id="PRO_1000191940" description="Aspartate 1-decarboxylase beta chain" evidence="1">
    <location>
        <begin position="1"/>
        <end position="24"/>
    </location>
</feature>
<feature type="chain" id="PRO_1000191941" description="Aspartate 1-decarboxylase alpha chain" evidence="1">
    <location>
        <begin position="25"/>
        <end position="128"/>
    </location>
</feature>
<feature type="active site" description="Schiff-base intermediate with substrate; via pyruvic acid" evidence="1">
    <location>
        <position position="25"/>
    </location>
</feature>
<feature type="active site" description="Proton donor" evidence="1">
    <location>
        <position position="58"/>
    </location>
</feature>
<feature type="binding site" evidence="1">
    <location>
        <position position="57"/>
    </location>
    <ligand>
        <name>substrate</name>
    </ligand>
</feature>
<feature type="binding site" evidence="1">
    <location>
        <begin position="73"/>
        <end position="75"/>
    </location>
    <ligand>
        <name>substrate</name>
    </ligand>
</feature>
<feature type="modified residue" description="Pyruvic acid (Ser)" evidence="1">
    <location>
        <position position="25"/>
    </location>
</feature>
<proteinExistence type="inferred from homology"/>
<protein>
    <recommendedName>
        <fullName evidence="1">Aspartate 1-decarboxylase</fullName>
        <ecNumber evidence="1">4.1.1.11</ecNumber>
    </recommendedName>
    <alternativeName>
        <fullName evidence="1">Aspartate alpha-decarboxylase</fullName>
    </alternativeName>
    <component>
        <recommendedName>
            <fullName evidence="1">Aspartate 1-decarboxylase beta chain</fullName>
        </recommendedName>
    </component>
    <component>
        <recommendedName>
            <fullName evidence="1">Aspartate 1-decarboxylase alpha chain</fullName>
        </recommendedName>
    </component>
</protein>
<name>PAND_PARPJ</name>
<evidence type="ECO:0000255" key="1">
    <source>
        <dbReference type="HAMAP-Rule" id="MF_00446"/>
    </source>
</evidence>
<gene>
    <name evidence="1" type="primary">panD</name>
    <name type="ordered locus">Bphyt_1009</name>
</gene>
<accession>B2T171</accession>